<evidence type="ECO:0000255" key="1">
    <source>
        <dbReference type="HAMAP-Rule" id="MF_00022"/>
    </source>
</evidence>
<gene>
    <name evidence="1" type="primary">gltX1</name>
    <name type="ordered locus">WP0166</name>
</gene>
<reference key="1">
    <citation type="journal article" date="2008" name="Mol. Biol. Evol.">
        <title>Genome evolution of Wolbachia strain wPip from the Culex pipiens group.</title>
        <authorList>
            <person name="Klasson L."/>
            <person name="Walker T."/>
            <person name="Sebaihia M."/>
            <person name="Sanders M.J."/>
            <person name="Quail M.A."/>
            <person name="Lord A."/>
            <person name="Sanders S."/>
            <person name="Earl J."/>
            <person name="O'Neill S.L."/>
            <person name="Thomson N."/>
            <person name="Sinkins S.P."/>
            <person name="Parkhill J."/>
        </authorList>
    </citation>
    <scope>NUCLEOTIDE SEQUENCE [LARGE SCALE GENOMIC DNA]</scope>
    <source>
        <strain>wPip</strain>
    </source>
</reference>
<keyword id="KW-0030">Aminoacyl-tRNA synthetase</keyword>
<keyword id="KW-0067">ATP-binding</keyword>
<keyword id="KW-0963">Cytoplasm</keyword>
<keyword id="KW-0436">Ligase</keyword>
<keyword id="KW-0547">Nucleotide-binding</keyword>
<keyword id="KW-0648">Protein biosynthesis</keyword>
<dbReference type="EC" id="6.1.1.17" evidence="1"/>
<dbReference type="EMBL" id="AM999887">
    <property type="protein sequence ID" value="CAQ54274.1"/>
    <property type="molecule type" value="Genomic_DNA"/>
</dbReference>
<dbReference type="SMR" id="B3CNK5"/>
<dbReference type="KEGG" id="wpi:WP0166"/>
<dbReference type="eggNOG" id="COG0008">
    <property type="taxonomic scope" value="Bacteria"/>
</dbReference>
<dbReference type="eggNOG" id="COG1384">
    <property type="taxonomic scope" value="Bacteria"/>
</dbReference>
<dbReference type="HOGENOM" id="CLU_015768_6_1_5"/>
<dbReference type="Proteomes" id="UP000008814">
    <property type="component" value="Chromosome"/>
</dbReference>
<dbReference type="GO" id="GO:0005737">
    <property type="term" value="C:cytoplasm"/>
    <property type="evidence" value="ECO:0007669"/>
    <property type="project" value="UniProtKB-SubCell"/>
</dbReference>
<dbReference type="GO" id="GO:0005524">
    <property type="term" value="F:ATP binding"/>
    <property type="evidence" value="ECO:0007669"/>
    <property type="project" value="UniProtKB-UniRule"/>
</dbReference>
<dbReference type="GO" id="GO:0004818">
    <property type="term" value="F:glutamate-tRNA ligase activity"/>
    <property type="evidence" value="ECO:0007669"/>
    <property type="project" value="UniProtKB-UniRule"/>
</dbReference>
<dbReference type="GO" id="GO:0000049">
    <property type="term" value="F:tRNA binding"/>
    <property type="evidence" value="ECO:0007669"/>
    <property type="project" value="InterPro"/>
</dbReference>
<dbReference type="GO" id="GO:0006424">
    <property type="term" value="P:glutamyl-tRNA aminoacylation"/>
    <property type="evidence" value="ECO:0007669"/>
    <property type="project" value="UniProtKB-UniRule"/>
</dbReference>
<dbReference type="Gene3D" id="1.10.10.350">
    <property type="match status" value="1"/>
</dbReference>
<dbReference type="Gene3D" id="3.40.50.620">
    <property type="entry name" value="HUPs"/>
    <property type="match status" value="1"/>
</dbReference>
<dbReference type="HAMAP" id="MF_00022">
    <property type="entry name" value="Glu_tRNA_synth_type1"/>
    <property type="match status" value="1"/>
</dbReference>
<dbReference type="InterPro" id="IPR045462">
    <property type="entry name" value="aa-tRNA-synth_I_cd-bd"/>
</dbReference>
<dbReference type="InterPro" id="IPR020751">
    <property type="entry name" value="aa-tRNA-synth_I_codon-bd_sub2"/>
</dbReference>
<dbReference type="InterPro" id="IPR001412">
    <property type="entry name" value="aa-tRNA-synth_I_CS"/>
</dbReference>
<dbReference type="InterPro" id="IPR008925">
    <property type="entry name" value="aa_tRNA-synth_I_cd-bd_sf"/>
</dbReference>
<dbReference type="InterPro" id="IPR004527">
    <property type="entry name" value="Glu-tRNA-ligase_bac/mito"/>
</dbReference>
<dbReference type="InterPro" id="IPR000924">
    <property type="entry name" value="Glu/Gln-tRNA-synth"/>
</dbReference>
<dbReference type="InterPro" id="IPR020058">
    <property type="entry name" value="Glu/Gln-tRNA-synth_Ib_cat-dom"/>
</dbReference>
<dbReference type="InterPro" id="IPR049940">
    <property type="entry name" value="GluQ/Sye"/>
</dbReference>
<dbReference type="InterPro" id="IPR014729">
    <property type="entry name" value="Rossmann-like_a/b/a_fold"/>
</dbReference>
<dbReference type="NCBIfam" id="TIGR00464">
    <property type="entry name" value="gltX_bact"/>
    <property type="match status" value="1"/>
</dbReference>
<dbReference type="PANTHER" id="PTHR43311">
    <property type="entry name" value="GLUTAMATE--TRNA LIGASE"/>
    <property type="match status" value="1"/>
</dbReference>
<dbReference type="PANTHER" id="PTHR43311:SF2">
    <property type="entry name" value="GLUTAMATE--TRNA LIGASE, MITOCHONDRIAL-RELATED"/>
    <property type="match status" value="1"/>
</dbReference>
<dbReference type="Pfam" id="PF19269">
    <property type="entry name" value="Anticodon_2"/>
    <property type="match status" value="1"/>
</dbReference>
<dbReference type="Pfam" id="PF00749">
    <property type="entry name" value="tRNA-synt_1c"/>
    <property type="match status" value="1"/>
</dbReference>
<dbReference type="PRINTS" id="PR00987">
    <property type="entry name" value="TRNASYNTHGLU"/>
</dbReference>
<dbReference type="SUPFAM" id="SSF48163">
    <property type="entry name" value="An anticodon-binding domain of class I aminoacyl-tRNA synthetases"/>
    <property type="match status" value="1"/>
</dbReference>
<dbReference type="SUPFAM" id="SSF52374">
    <property type="entry name" value="Nucleotidylyl transferase"/>
    <property type="match status" value="1"/>
</dbReference>
<dbReference type="PROSITE" id="PS00178">
    <property type="entry name" value="AA_TRNA_LIGASE_I"/>
    <property type="match status" value="1"/>
</dbReference>
<protein>
    <recommendedName>
        <fullName evidence="1">Glutamate--tRNA ligase 1</fullName>
        <ecNumber evidence="1">6.1.1.17</ecNumber>
    </recommendedName>
    <alternativeName>
        <fullName evidence="1">Glutamyl-tRNA synthetase 1</fullName>
        <shortName evidence="1">GluRS 1</shortName>
    </alternativeName>
</protein>
<proteinExistence type="inferred from homology"/>
<name>SYE1_WOLPP</name>
<sequence length="444" mass="51763">MLTRFAPSPTGYLHVGNIRTALICWMYTRNQNGKFLLRFDDTDLERSDIKYVDNIIEDLKWIGINWNSSFKQSERFERYNEVFLQLMKEGHIYACYETREELDTKRKLQLKQGFPPVYDKGALLLTEQEKIRYEQEGRKPHFRFKLDRNKTVKWNDEVKGEINIATIHISDPVVKREDGIYTYMLPSVIDDIDFNVTHVVRGEDHVTNTAVQIQMIQALKAKIPIFAHLPLLHFDDSKISKRKGGLDIKSIREDEIESMALTSYLAKLGTSDPIEAYIDMQSLIDSFDIKKFSSASLQFSLSEMYKLNSKVLQQMPFEMVQDRLSQIGSEFWYFIRSNIEKFSEVAKWWKICKFGIEPVVLNKEFIKIALSTLPQGDCNENTLSEWVKNIRQTIDIKAKDLFMQLRLALTGTETGPELAKLLIFIGRESIIARLEESQRIIQKV</sequence>
<organism>
    <name type="scientific">Wolbachia pipientis subsp. Culex pipiens (strain wPip)</name>
    <dbReference type="NCBI Taxonomy" id="570417"/>
    <lineage>
        <taxon>Bacteria</taxon>
        <taxon>Pseudomonadati</taxon>
        <taxon>Pseudomonadota</taxon>
        <taxon>Alphaproteobacteria</taxon>
        <taxon>Rickettsiales</taxon>
        <taxon>Anaplasmataceae</taxon>
        <taxon>Wolbachieae</taxon>
        <taxon>Wolbachia</taxon>
    </lineage>
</organism>
<accession>B3CNK5</accession>
<comment type="function">
    <text evidence="1">Catalyzes the attachment of glutamate to tRNA(Glu) in a two-step reaction: glutamate is first activated by ATP to form Glu-AMP and then transferred to the acceptor end of tRNA(Glu).</text>
</comment>
<comment type="catalytic activity">
    <reaction evidence="1">
        <text>tRNA(Glu) + L-glutamate + ATP = L-glutamyl-tRNA(Glu) + AMP + diphosphate</text>
        <dbReference type="Rhea" id="RHEA:23540"/>
        <dbReference type="Rhea" id="RHEA-COMP:9663"/>
        <dbReference type="Rhea" id="RHEA-COMP:9680"/>
        <dbReference type="ChEBI" id="CHEBI:29985"/>
        <dbReference type="ChEBI" id="CHEBI:30616"/>
        <dbReference type="ChEBI" id="CHEBI:33019"/>
        <dbReference type="ChEBI" id="CHEBI:78442"/>
        <dbReference type="ChEBI" id="CHEBI:78520"/>
        <dbReference type="ChEBI" id="CHEBI:456215"/>
        <dbReference type="EC" id="6.1.1.17"/>
    </reaction>
</comment>
<comment type="subunit">
    <text evidence="1">Monomer.</text>
</comment>
<comment type="subcellular location">
    <subcellularLocation>
        <location evidence="1">Cytoplasm</location>
    </subcellularLocation>
</comment>
<comment type="similarity">
    <text evidence="1">Belongs to the class-I aminoacyl-tRNA synthetase family. Glutamate--tRNA ligase type 1 subfamily.</text>
</comment>
<feature type="chain" id="PRO_0000367794" description="Glutamate--tRNA ligase 1">
    <location>
        <begin position="1"/>
        <end position="444"/>
    </location>
</feature>
<feature type="short sequence motif" description="'HIGH' region" evidence="1">
    <location>
        <begin position="7"/>
        <end position="17"/>
    </location>
</feature>
<feature type="short sequence motif" description="'KMSKS' region" evidence="1">
    <location>
        <begin position="238"/>
        <end position="242"/>
    </location>
</feature>
<feature type="binding site" evidence="1">
    <location>
        <position position="241"/>
    </location>
    <ligand>
        <name>ATP</name>
        <dbReference type="ChEBI" id="CHEBI:30616"/>
    </ligand>
</feature>